<name>RLMH_BIFLS</name>
<comment type="function">
    <text evidence="1">Specifically methylates the pseudouridine at position 1915 (m3Psi1915) in 23S rRNA.</text>
</comment>
<comment type="catalytic activity">
    <reaction evidence="1">
        <text>pseudouridine(1915) in 23S rRNA + S-adenosyl-L-methionine = N(3)-methylpseudouridine(1915) in 23S rRNA + S-adenosyl-L-homocysteine + H(+)</text>
        <dbReference type="Rhea" id="RHEA:42752"/>
        <dbReference type="Rhea" id="RHEA-COMP:10221"/>
        <dbReference type="Rhea" id="RHEA-COMP:10222"/>
        <dbReference type="ChEBI" id="CHEBI:15378"/>
        <dbReference type="ChEBI" id="CHEBI:57856"/>
        <dbReference type="ChEBI" id="CHEBI:59789"/>
        <dbReference type="ChEBI" id="CHEBI:65314"/>
        <dbReference type="ChEBI" id="CHEBI:74486"/>
        <dbReference type="EC" id="2.1.1.177"/>
    </reaction>
</comment>
<comment type="subunit">
    <text evidence="1">Homodimer.</text>
</comment>
<comment type="subcellular location">
    <subcellularLocation>
        <location evidence="1">Cytoplasm</location>
    </subcellularLocation>
</comment>
<comment type="similarity">
    <text evidence="1">Belongs to the RNA methyltransferase RlmH family.</text>
</comment>
<feature type="chain" id="PRO_1000199812" description="Ribosomal RNA large subunit methyltransferase H">
    <location>
        <begin position="1"/>
        <end position="159"/>
    </location>
</feature>
<feature type="binding site" evidence="1">
    <location>
        <position position="76"/>
    </location>
    <ligand>
        <name>S-adenosyl-L-methionine</name>
        <dbReference type="ChEBI" id="CHEBI:59789"/>
    </ligand>
</feature>
<feature type="binding site" evidence="1">
    <location>
        <position position="108"/>
    </location>
    <ligand>
        <name>S-adenosyl-L-methionine</name>
        <dbReference type="ChEBI" id="CHEBI:59789"/>
    </ligand>
</feature>
<feature type="binding site" evidence="1">
    <location>
        <begin position="127"/>
        <end position="132"/>
    </location>
    <ligand>
        <name>S-adenosyl-L-methionine</name>
        <dbReference type="ChEBI" id="CHEBI:59789"/>
    </ligand>
</feature>
<keyword id="KW-0963">Cytoplasm</keyword>
<keyword id="KW-0489">Methyltransferase</keyword>
<keyword id="KW-0698">rRNA processing</keyword>
<keyword id="KW-0949">S-adenosyl-L-methionine</keyword>
<keyword id="KW-0808">Transferase</keyword>
<proteinExistence type="inferred from homology"/>
<accession>B7GNR6</accession>
<accession>E8MNZ8</accession>
<protein>
    <recommendedName>
        <fullName evidence="1">Ribosomal RNA large subunit methyltransferase H</fullName>
        <ecNumber evidence="1">2.1.1.177</ecNumber>
    </recommendedName>
    <alternativeName>
        <fullName evidence="1">23S rRNA (pseudouridine1915-N3)-methyltransferase</fullName>
    </alternativeName>
    <alternativeName>
        <fullName evidence="1">23S rRNA m3Psi1915 methyltransferase</fullName>
    </alternativeName>
    <alternativeName>
        <fullName evidence="1">rRNA (pseudouridine-N3-)-methyltransferase RlmH</fullName>
    </alternativeName>
</protein>
<evidence type="ECO:0000255" key="1">
    <source>
        <dbReference type="HAMAP-Rule" id="MF_00658"/>
    </source>
</evidence>
<gene>
    <name evidence="1" type="primary">rlmH</name>
    <name type="ordered locus">Blon_2364</name>
    <name type="ordered locus">BLIJ_2437</name>
</gene>
<sequence>MNIDIVCVGRIKERYLTDAIAEYSKRLSRYCKLNIIEVADEKTPEHASEGVGRQIKAKEGERIAKHLKDGAFVIALAINGKQLSSEELAAKINDLGLRGTSHIQLVIGGSIGLDDAILRRADFLLSFSKMTFPHQLMRVILLEQIYRAYKINAHEPYHK</sequence>
<dbReference type="EC" id="2.1.1.177" evidence="1"/>
<dbReference type="EMBL" id="CP001095">
    <property type="protein sequence ID" value="ACJ53422.1"/>
    <property type="molecule type" value="Genomic_DNA"/>
</dbReference>
<dbReference type="EMBL" id="AP010889">
    <property type="protein sequence ID" value="BAJ70014.1"/>
    <property type="molecule type" value="Genomic_DNA"/>
</dbReference>
<dbReference type="RefSeq" id="WP_012578589.1">
    <property type="nucleotide sequence ID" value="NC_011593.1"/>
</dbReference>
<dbReference type="SMR" id="B7GNR6"/>
<dbReference type="KEGG" id="bln:Blon_2364"/>
<dbReference type="KEGG" id="blon:BLIJ_2437"/>
<dbReference type="PATRIC" id="fig|391904.8.peg.2440"/>
<dbReference type="HOGENOM" id="CLU_100552_0_0_11"/>
<dbReference type="Proteomes" id="UP000001360">
    <property type="component" value="Chromosome"/>
</dbReference>
<dbReference type="GO" id="GO:0005737">
    <property type="term" value="C:cytoplasm"/>
    <property type="evidence" value="ECO:0007669"/>
    <property type="project" value="UniProtKB-SubCell"/>
</dbReference>
<dbReference type="GO" id="GO:0070038">
    <property type="term" value="F:rRNA (pseudouridine-N3-)-methyltransferase activity"/>
    <property type="evidence" value="ECO:0007669"/>
    <property type="project" value="UniProtKB-UniRule"/>
</dbReference>
<dbReference type="CDD" id="cd18081">
    <property type="entry name" value="RlmH-like"/>
    <property type="match status" value="1"/>
</dbReference>
<dbReference type="Gene3D" id="3.40.1280.10">
    <property type="match status" value="1"/>
</dbReference>
<dbReference type="HAMAP" id="MF_00658">
    <property type="entry name" value="23SrRNA_methyltr_H"/>
    <property type="match status" value="1"/>
</dbReference>
<dbReference type="InterPro" id="IPR029028">
    <property type="entry name" value="Alpha/beta_knot_MTases"/>
</dbReference>
<dbReference type="InterPro" id="IPR003742">
    <property type="entry name" value="RlmH-like"/>
</dbReference>
<dbReference type="InterPro" id="IPR029026">
    <property type="entry name" value="tRNA_m1G_MTases_N"/>
</dbReference>
<dbReference type="NCBIfam" id="NF000985">
    <property type="entry name" value="PRK00103.1-3"/>
    <property type="match status" value="1"/>
</dbReference>
<dbReference type="NCBIfam" id="TIGR00246">
    <property type="entry name" value="tRNA_RlmH_YbeA"/>
    <property type="match status" value="1"/>
</dbReference>
<dbReference type="PANTHER" id="PTHR33603">
    <property type="entry name" value="METHYLTRANSFERASE"/>
    <property type="match status" value="1"/>
</dbReference>
<dbReference type="PANTHER" id="PTHR33603:SF1">
    <property type="entry name" value="RIBOSOMAL RNA LARGE SUBUNIT METHYLTRANSFERASE H"/>
    <property type="match status" value="1"/>
</dbReference>
<dbReference type="Pfam" id="PF02590">
    <property type="entry name" value="SPOUT_MTase"/>
    <property type="match status" value="1"/>
</dbReference>
<dbReference type="PIRSF" id="PIRSF004505">
    <property type="entry name" value="MT_bac"/>
    <property type="match status" value="1"/>
</dbReference>
<dbReference type="SUPFAM" id="SSF75217">
    <property type="entry name" value="alpha/beta knot"/>
    <property type="match status" value="1"/>
</dbReference>
<organism>
    <name type="scientific">Bifidobacterium longum subsp. infantis (strain ATCC 15697 / DSM 20088 / JCM 1222 / NCTC 11817 / S12)</name>
    <dbReference type="NCBI Taxonomy" id="391904"/>
    <lineage>
        <taxon>Bacteria</taxon>
        <taxon>Bacillati</taxon>
        <taxon>Actinomycetota</taxon>
        <taxon>Actinomycetes</taxon>
        <taxon>Bifidobacteriales</taxon>
        <taxon>Bifidobacteriaceae</taxon>
        <taxon>Bifidobacterium</taxon>
    </lineage>
</organism>
<reference key="1">
    <citation type="journal article" date="2008" name="Proc. Natl. Acad. Sci. U.S.A.">
        <title>The genome sequence of Bifidobacterium longum subsp. infantis reveals adaptations for milk utilization within the infant microbiome.</title>
        <authorList>
            <person name="Sela D.A."/>
            <person name="Chapman J."/>
            <person name="Adeuya A."/>
            <person name="Kim J.H."/>
            <person name="Chen F."/>
            <person name="Whitehead T.R."/>
            <person name="Lapidus A."/>
            <person name="Rokhsar D.S."/>
            <person name="Lebrilla C.B."/>
            <person name="German J.B."/>
            <person name="Price N.P."/>
            <person name="Richardson P.M."/>
            <person name="Mills D.A."/>
        </authorList>
    </citation>
    <scope>NUCLEOTIDE SEQUENCE [LARGE SCALE GENOMIC DNA]</scope>
    <source>
        <strain>ATCC 15697 / DSM 20088 / JCM 1222 / NCTC 11817 / S12</strain>
    </source>
</reference>
<reference key="2">
    <citation type="journal article" date="2011" name="Nature">
        <title>Bifidobacteria can protect from enteropathogenic infection through production of acetate.</title>
        <authorList>
            <person name="Fukuda S."/>
            <person name="Toh H."/>
            <person name="Hase K."/>
            <person name="Oshima K."/>
            <person name="Nakanishi Y."/>
            <person name="Yoshimura K."/>
            <person name="Tobe T."/>
            <person name="Clarke J.M."/>
            <person name="Topping D.L."/>
            <person name="Suzuki T."/>
            <person name="Taylor T.D."/>
            <person name="Itoh K."/>
            <person name="Kikuchi J."/>
            <person name="Morita H."/>
            <person name="Hattori M."/>
            <person name="Ohno H."/>
        </authorList>
    </citation>
    <scope>NUCLEOTIDE SEQUENCE [LARGE SCALE GENOMIC DNA]</scope>
    <source>
        <strain>ATCC 15697 / DSM 20088 / JCM 1222 / NCTC 11817 / S12</strain>
    </source>
</reference>